<organism>
    <name type="scientific">Sminthopsis gilberti</name>
    <name type="common">Gilbert's dunnart</name>
    <dbReference type="NCBI Taxonomy" id="75755"/>
    <lineage>
        <taxon>Eukaryota</taxon>
        <taxon>Metazoa</taxon>
        <taxon>Chordata</taxon>
        <taxon>Craniata</taxon>
        <taxon>Vertebrata</taxon>
        <taxon>Euteleostomi</taxon>
        <taxon>Mammalia</taxon>
        <taxon>Metatheria</taxon>
        <taxon>Dasyuromorphia</taxon>
        <taxon>Dasyuridae</taxon>
        <taxon>Sminthopsis</taxon>
    </lineage>
</organism>
<feature type="chain" id="PRO_0000254860" description="Cytochrome b">
    <location>
        <begin position="1"/>
        <end position="381"/>
    </location>
</feature>
<feature type="transmembrane region" description="Helical" evidence="2">
    <location>
        <begin position="33"/>
        <end position="53"/>
    </location>
</feature>
<feature type="transmembrane region" description="Helical" evidence="2">
    <location>
        <begin position="77"/>
        <end position="98"/>
    </location>
</feature>
<feature type="transmembrane region" description="Helical" evidence="2">
    <location>
        <begin position="113"/>
        <end position="133"/>
    </location>
</feature>
<feature type="transmembrane region" description="Helical" evidence="2">
    <location>
        <begin position="178"/>
        <end position="198"/>
    </location>
</feature>
<feature type="transmembrane region" description="Helical" evidence="2">
    <location>
        <begin position="226"/>
        <end position="246"/>
    </location>
</feature>
<feature type="transmembrane region" description="Helical" evidence="2">
    <location>
        <begin position="288"/>
        <end position="308"/>
    </location>
</feature>
<feature type="transmembrane region" description="Helical" evidence="2">
    <location>
        <begin position="320"/>
        <end position="340"/>
    </location>
</feature>
<feature type="transmembrane region" description="Helical" evidence="2">
    <location>
        <begin position="347"/>
        <end position="367"/>
    </location>
</feature>
<feature type="binding site" description="axial binding residue" evidence="2">
    <location>
        <position position="83"/>
    </location>
    <ligand>
        <name>heme b</name>
        <dbReference type="ChEBI" id="CHEBI:60344"/>
        <label>b562</label>
    </ligand>
    <ligandPart>
        <name>Fe</name>
        <dbReference type="ChEBI" id="CHEBI:18248"/>
    </ligandPart>
</feature>
<feature type="binding site" description="axial binding residue" evidence="2">
    <location>
        <position position="97"/>
    </location>
    <ligand>
        <name>heme b</name>
        <dbReference type="ChEBI" id="CHEBI:60344"/>
        <label>b566</label>
    </ligand>
    <ligandPart>
        <name>Fe</name>
        <dbReference type="ChEBI" id="CHEBI:18248"/>
    </ligandPart>
</feature>
<feature type="binding site" description="axial binding residue" evidence="2">
    <location>
        <position position="182"/>
    </location>
    <ligand>
        <name>heme b</name>
        <dbReference type="ChEBI" id="CHEBI:60344"/>
        <label>b562</label>
    </ligand>
    <ligandPart>
        <name>Fe</name>
        <dbReference type="ChEBI" id="CHEBI:18248"/>
    </ligandPart>
</feature>
<feature type="binding site" description="axial binding residue" evidence="2">
    <location>
        <position position="196"/>
    </location>
    <ligand>
        <name>heme b</name>
        <dbReference type="ChEBI" id="CHEBI:60344"/>
        <label>b566</label>
    </ligand>
    <ligandPart>
        <name>Fe</name>
        <dbReference type="ChEBI" id="CHEBI:18248"/>
    </ligandPart>
</feature>
<feature type="binding site" evidence="2">
    <location>
        <position position="201"/>
    </location>
    <ligand>
        <name>a ubiquinone</name>
        <dbReference type="ChEBI" id="CHEBI:16389"/>
    </ligand>
</feature>
<geneLocation type="mitochondrion"/>
<comment type="function">
    <text evidence="2">Component of the ubiquinol-cytochrome c reductase complex (complex III or cytochrome b-c1 complex) that is part of the mitochondrial respiratory chain. The b-c1 complex mediates electron transfer from ubiquinol to cytochrome c. Contributes to the generation of a proton gradient across the mitochondrial membrane that is then used for ATP synthesis.</text>
</comment>
<comment type="cofactor">
    <cofactor evidence="2">
        <name>heme b</name>
        <dbReference type="ChEBI" id="CHEBI:60344"/>
    </cofactor>
    <text evidence="2">Binds 2 heme b groups non-covalently.</text>
</comment>
<comment type="subunit">
    <text evidence="2">The cytochrome bc1 complex contains 11 subunits: 3 respiratory subunits (MT-CYB, CYC1 and UQCRFS1), 2 core proteins (UQCRC1 and UQCRC2) and 6 low-molecular weight proteins (UQCRH/QCR6, UQCRB/QCR7, UQCRQ/QCR8, UQCR10/QCR9, UQCR11/QCR10 and a cleavage product of UQCRFS1). This cytochrome bc1 complex then forms a dimer.</text>
</comment>
<comment type="subcellular location">
    <subcellularLocation>
        <location evidence="2">Mitochondrion inner membrane</location>
        <topology evidence="2">Multi-pass membrane protein</topology>
    </subcellularLocation>
</comment>
<comment type="miscellaneous">
    <text evidence="1">Heme 1 (or BL or b562) is low-potential and absorbs at about 562 nm, and heme 2 (or BH or b566) is high-potential and absorbs at about 566 nm.</text>
</comment>
<comment type="similarity">
    <text evidence="3 4">Belongs to the cytochrome b family.</text>
</comment>
<comment type="caution">
    <text evidence="2">The full-length protein contains only eight transmembrane helices, not nine as predicted by bioinformatics tools.</text>
</comment>
<gene>
    <name type="primary">MT-CYB</name>
    <name type="synonym">COB</name>
    <name type="synonym">CYTB</name>
    <name type="synonym">MTCYB</name>
</gene>
<sequence>MINLRKTHPLMKIINHSFIDLPAPSNISAWWNFGSLLGICLVIQILTGLFLAMHYTSDTLTAFSSVAHICRDVNYGWLIRNLHANGASMFFMCLFLHVGRGIYYGSYLYKETWNIGVILLLTVMATAFVGYVLPWGQMSFWGATVITNLLSAIPYIGTTLAEWIWGGFAVDKATLTRFFAFHFILPFIIMALVIVHLLFLHETGSNNPSGINPDSDKIPFHPYYTIKDALGLMFLLLVLLSLALFSPDSLGDPDNFSPANPLNTPPHIKPEWYFLFAYAILRSIPNKLGGVLALLASILILLIIPFLHTANQRSMMFRPVSQTLFWILTANLITLTWIGGQPVEQPFIIIGQLASILYFTLLLVLMPLAGMFENYMLEAQR</sequence>
<dbReference type="EMBL" id="AF088924">
    <property type="protein sequence ID" value="AAD38434.1"/>
    <property type="molecule type" value="Genomic_DNA"/>
</dbReference>
<dbReference type="SMR" id="Q9XP84"/>
<dbReference type="GO" id="GO:0005743">
    <property type="term" value="C:mitochondrial inner membrane"/>
    <property type="evidence" value="ECO:0007669"/>
    <property type="project" value="UniProtKB-SubCell"/>
</dbReference>
<dbReference type="GO" id="GO:0045275">
    <property type="term" value="C:respiratory chain complex III"/>
    <property type="evidence" value="ECO:0007669"/>
    <property type="project" value="InterPro"/>
</dbReference>
<dbReference type="GO" id="GO:0046872">
    <property type="term" value="F:metal ion binding"/>
    <property type="evidence" value="ECO:0007669"/>
    <property type="project" value="UniProtKB-KW"/>
</dbReference>
<dbReference type="GO" id="GO:0008121">
    <property type="term" value="F:ubiquinol-cytochrome-c reductase activity"/>
    <property type="evidence" value="ECO:0007669"/>
    <property type="project" value="InterPro"/>
</dbReference>
<dbReference type="GO" id="GO:0006122">
    <property type="term" value="P:mitochondrial electron transport, ubiquinol to cytochrome c"/>
    <property type="evidence" value="ECO:0007669"/>
    <property type="project" value="TreeGrafter"/>
</dbReference>
<dbReference type="CDD" id="cd00290">
    <property type="entry name" value="cytochrome_b_C"/>
    <property type="match status" value="1"/>
</dbReference>
<dbReference type="CDD" id="cd00284">
    <property type="entry name" value="Cytochrome_b_N"/>
    <property type="match status" value="1"/>
</dbReference>
<dbReference type="FunFam" id="1.20.810.10:FF:000002">
    <property type="entry name" value="Cytochrome b"/>
    <property type="match status" value="1"/>
</dbReference>
<dbReference type="Gene3D" id="1.20.810.10">
    <property type="entry name" value="Cytochrome Bc1 Complex, Chain C"/>
    <property type="match status" value="1"/>
</dbReference>
<dbReference type="InterPro" id="IPR005798">
    <property type="entry name" value="Cyt_b/b6_C"/>
</dbReference>
<dbReference type="InterPro" id="IPR036150">
    <property type="entry name" value="Cyt_b/b6_C_sf"/>
</dbReference>
<dbReference type="InterPro" id="IPR005797">
    <property type="entry name" value="Cyt_b/b6_N"/>
</dbReference>
<dbReference type="InterPro" id="IPR027387">
    <property type="entry name" value="Cytb/b6-like_sf"/>
</dbReference>
<dbReference type="InterPro" id="IPR030689">
    <property type="entry name" value="Cytochrome_b"/>
</dbReference>
<dbReference type="InterPro" id="IPR048260">
    <property type="entry name" value="Cytochrome_b_C_euk/bac"/>
</dbReference>
<dbReference type="InterPro" id="IPR048259">
    <property type="entry name" value="Cytochrome_b_N_euk/bac"/>
</dbReference>
<dbReference type="InterPro" id="IPR016174">
    <property type="entry name" value="Di-haem_cyt_TM"/>
</dbReference>
<dbReference type="PANTHER" id="PTHR19271">
    <property type="entry name" value="CYTOCHROME B"/>
    <property type="match status" value="1"/>
</dbReference>
<dbReference type="PANTHER" id="PTHR19271:SF16">
    <property type="entry name" value="CYTOCHROME B"/>
    <property type="match status" value="1"/>
</dbReference>
<dbReference type="Pfam" id="PF00032">
    <property type="entry name" value="Cytochrom_B_C"/>
    <property type="match status" value="1"/>
</dbReference>
<dbReference type="Pfam" id="PF00033">
    <property type="entry name" value="Cytochrome_B"/>
    <property type="match status" value="1"/>
</dbReference>
<dbReference type="PIRSF" id="PIRSF038885">
    <property type="entry name" value="COB"/>
    <property type="match status" value="1"/>
</dbReference>
<dbReference type="SUPFAM" id="SSF81648">
    <property type="entry name" value="a domain/subunit of cytochrome bc1 complex (Ubiquinol-cytochrome c reductase)"/>
    <property type="match status" value="1"/>
</dbReference>
<dbReference type="SUPFAM" id="SSF81342">
    <property type="entry name" value="Transmembrane di-heme cytochromes"/>
    <property type="match status" value="1"/>
</dbReference>
<dbReference type="PROSITE" id="PS51003">
    <property type="entry name" value="CYTB_CTER"/>
    <property type="match status" value="1"/>
</dbReference>
<dbReference type="PROSITE" id="PS51002">
    <property type="entry name" value="CYTB_NTER"/>
    <property type="match status" value="1"/>
</dbReference>
<reference key="1">
    <citation type="journal article" date="1999" name="Mol. Phylogenet. Evol.">
        <title>Systematic relationships within the dasyurid marsupial tribe Sminthopsini -- a multigene approach.</title>
        <authorList>
            <person name="Blacket M.J."/>
            <person name="Krajewski C."/>
            <person name="Labrinidis A."/>
            <person name="Cambron B."/>
            <person name="Cooper S."/>
            <person name="Westerman M."/>
        </authorList>
    </citation>
    <scope>NUCLEOTIDE SEQUENCE [GENOMIC DNA]</scope>
</reference>
<protein>
    <recommendedName>
        <fullName>Cytochrome b</fullName>
    </recommendedName>
    <alternativeName>
        <fullName>Complex III subunit 3</fullName>
    </alternativeName>
    <alternativeName>
        <fullName>Complex III subunit III</fullName>
    </alternativeName>
    <alternativeName>
        <fullName>Cytochrome b-c1 complex subunit 3</fullName>
    </alternativeName>
    <alternativeName>
        <fullName>Ubiquinol-cytochrome-c reductase complex cytochrome b subunit</fullName>
    </alternativeName>
</protein>
<keyword id="KW-0249">Electron transport</keyword>
<keyword id="KW-0349">Heme</keyword>
<keyword id="KW-0408">Iron</keyword>
<keyword id="KW-0472">Membrane</keyword>
<keyword id="KW-0479">Metal-binding</keyword>
<keyword id="KW-0496">Mitochondrion</keyword>
<keyword id="KW-0999">Mitochondrion inner membrane</keyword>
<keyword id="KW-0679">Respiratory chain</keyword>
<keyword id="KW-0812">Transmembrane</keyword>
<keyword id="KW-1133">Transmembrane helix</keyword>
<keyword id="KW-0813">Transport</keyword>
<keyword id="KW-0830">Ubiquinone</keyword>
<name>CYB_SMIGI</name>
<evidence type="ECO:0000250" key="1"/>
<evidence type="ECO:0000250" key="2">
    <source>
        <dbReference type="UniProtKB" id="P00157"/>
    </source>
</evidence>
<evidence type="ECO:0000255" key="3">
    <source>
        <dbReference type="PROSITE-ProRule" id="PRU00967"/>
    </source>
</evidence>
<evidence type="ECO:0000255" key="4">
    <source>
        <dbReference type="PROSITE-ProRule" id="PRU00968"/>
    </source>
</evidence>
<proteinExistence type="inferred from homology"/>
<accession>Q9XP84</accession>